<proteinExistence type="inferred from homology"/>
<reference key="1">
    <citation type="journal article" date="2006" name="Genome Res.">
        <title>Massive genome erosion and functional adaptations provide insights into the symbiotic lifestyle of Sodalis glossinidius in the tsetse host.</title>
        <authorList>
            <person name="Toh H."/>
            <person name="Weiss B.L."/>
            <person name="Perkin S.A.H."/>
            <person name="Yamashita A."/>
            <person name="Oshima K."/>
            <person name="Hattori M."/>
            <person name="Aksoy S."/>
        </authorList>
    </citation>
    <scope>NUCLEOTIDE SEQUENCE [LARGE SCALE GENOMIC DNA]</scope>
    <source>
        <strain>morsitans</strain>
    </source>
</reference>
<name>KHSE_SODGM</name>
<evidence type="ECO:0000255" key="1">
    <source>
        <dbReference type="HAMAP-Rule" id="MF_00384"/>
    </source>
</evidence>
<feature type="chain" id="PRO_1000049167" description="Homoserine kinase">
    <location>
        <begin position="1"/>
        <end position="310"/>
    </location>
</feature>
<feature type="binding site" evidence="1">
    <location>
        <begin position="91"/>
        <end position="101"/>
    </location>
    <ligand>
        <name>ATP</name>
        <dbReference type="ChEBI" id="CHEBI:30616"/>
    </ligand>
</feature>
<protein>
    <recommendedName>
        <fullName evidence="1">Homoserine kinase</fullName>
        <shortName evidence="1">HK</shortName>
        <shortName evidence="1">HSK</shortName>
        <ecNumber evidence="1">2.7.1.39</ecNumber>
    </recommendedName>
</protein>
<keyword id="KW-0028">Amino-acid biosynthesis</keyword>
<keyword id="KW-0067">ATP-binding</keyword>
<keyword id="KW-0963">Cytoplasm</keyword>
<keyword id="KW-0418">Kinase</keyword>
<keyword id="KW-0547">Nucleotide-binding</keyword>
<keyword id="KW-0791">Threonine biosynthesis</keyword>
<keyword id="KW-0808">Transferase</keyword>
<organism>
    <name type="scientific">Sodalis glossinidius (strain morsitans)</name>
    <dbReference type="NCBI Taxonomy" id="343509"/>
    <lineage>
        <taxon>Bacteria</taxon>
        <taxon>Pseudomonadati</taxon>
        <taxon>Pseudomonadota</taxon>
        <taxon>Gammaproteobacteria</taxon>
        <taxon>Enterobacterales</taxon>
        <taxon>Bruguierivoracaceae</taxon>
        <taxon>Sodalis</taxon>
    </lineage>
</organism>
<gene>
    <name evidence="1" type="primary">thrB</name>
    <name type="ordered locus">SG0405</name>
</gene>
<accession>Q2NVZ5</accession>
<comment type="function">
    <text evidence="1">Catalyzes the ATP-dependent phosphorylation of L-homoserine to L-homoserine phosphate.</text>
</comment>
<comment type="catalytic activity">
    <reaction evidence="1">
        <text>L-homoserine + ATP = O-phospho-L-homoserine + ADP + H(+)</text>
        <dbReference type="Rhea" id="RHEA:13985"/>
        <dbReference type="ChEBI" id="CHEBI:15378"/>
        <dbReference type="ChEBI" id="CHEBI:30616"/>
        <dbReference type="ChEBI" id="CHEBI:57476"/>
        <dbReference type="ChEBI" id="CHEBI:57590"/>
        <dbReference type="ChEBI" id="CHEBI:456216"/>
        <dbReference type="EC" id="2.7.1.39"/>
    </reaction>
</comment>
<comment type="pathway">
    <text evidence="1">Amino-acid biosynthesis; L-threonine biosynthesis; L-threonine from L-aspartate: step 4/5.</text>
</comment>
<comment type="subcellular location">
    <subcellularLocation>
        <location evidence="1">Cytoplasm</location>
    </subcellularLocation>
</comment>
<comment type="similarity">
    <text evidence="1">Belongs to the GHMP kinase family. Homoserine kinase subfamily.</text>
</comment>
<dbReference type="EC" id="2.7.1.39" evidence="1"/>
<dbReference type="EMBL" id="AP008232">
    <property type="protein sequence ID" value="BAE73680.1"/>
    <property type="molecule type" value="Genomic_DNA"/>
</dbReference>
<dbReference type="RefSeq" id="WP_011410268.1">
    <property type="nucleotide sequence ID" value="NC_007712.1"/>
</dbReference>
<dbReference type="SMR" id="Q2NVZ5"/>
<dbReference type="STRING" id="343509.SG0405"/>
<dbReference type="KEGG" id="sgl:SG0405"/>
<dbReference type="eggNOG" id="COG0083">
    <property type="taxonomic scope" value="Bacteria"/>
</dbReference>
<dbReference type="HOGENOM" id="CLU_041243_1_1_6"/>
<dbReference type="OrthoDB" id="9769912at2"/>
<dbReference type="BioCyc" id="SGLO343509:SGP1_RS03755-MONOMER"/>
<dbReference type="UniPathway" id="UPA00050">
    <property type="reaction ID" value="UER00064"/>
</dbReference>
<dbReference type="Proteomes" id="UP000001932">
    <property type="component" value="Chromosome"/>
</dbReference>
<dbReference type="GO" id="GO:0005737">
    <property type="term" value="C:cytoplasm"/>
    <property type="evidence" value="ECO:0007669"/>
    <property type="project" value="UniProtKB-SubCell"/>
</dbReference>
<dbReference type="GO" id="GO:0005524">
    <property type="term" value="F:ATP binding"/>
    <property type="evidence" value="ECO:0007669"/>
    <property type="project" value="UniProtKB-UniRule"/>
</dbReference>
<dbReference type="GO" id="GO:0004413">
    <property type="term" value="F:homoserine kinase activity"/>
    <property type="evidence" value="ECO:0007669"/>
    <property type="project" value="UniProtKB-UniRule"/>
</dbReference>
<dbReference type="GO" id="GO:0009088">
    <property type="term" value="P:threonine biosynthetic process"/>
    <property type="evidence" value="ECO:0007669"/>
    <property type="project" value="UniProtKB-UniRule"/>
</dbReference>
<dbReference type="FunFam" id="3.30.230.10:FF:000020">
    <property type="entry name" value="Homoserine kinase"/>
    <property type="match status" value="1"/>
</dbReference>
<dbReference type="FunFam" id="3.30.70.890:FF:000002">
    <property type="entry name" value="Homoserine kinase"/>
    <property type="match status" value="1"/>
</dbReference>
<dbReference type="Gene3D" id="3.30.230.10">
    <property type="match status" value="1"/>
</dbReference>
<dbReference type="Gene3D" id="3.30.70.890">
    <property type="entry name" value="GHMP kinase, C-terminal domain"/>
    <property type="match status" value="1"/>
</dbReference>
<dbReference type="HAMAP" id="MF_00384">
    <property type="entry name" value="Homoser_kinase"/>
    <property type="match status" value="1"/>
</dbReference>
<dbReference type="InterPro" id="IPR013750">
    <property type="entry name" value="GHMP_kinase_C_dom"/>
</dbReference>
<dbReference type="InterPro" id="IPR036554">
    <property type="entry name" value="GHMP_kinase_C_sf"/>
</dbReference>
<dbReference type="InterPro" id="IPR006204">
    <property type="entry name" value="GHMP_kinase_N_dom"/>
</dbReference>
<dbReference type="InterPro" id="IPR006203">
    <property type="entry name" value="GHMP_knse_ATP-bd_CS"/>
</dbReference>
<dbReference type="InterPro" id="IPR000870">
    <property type="entry name" value="Homoserine_kinase"/>
</dbReference>
<dbReference type="InterPro" id="IPR020568">
    <property type="entry name" value="Ribosomal_Su5_D2-typ_SF"/>
</dbReference>
<dbReference type="InterPro" id="IPR014721">
    <property type="entry name" value="Ribsml_uS5_D2-typ_fold_subgr"/>
</dbReference>
<dbReference type="NCBIfam" id="NF002288">
    <property type="entry name" value="PRK01212.1-4"/>
    <property type="match status" value="1"/>
</dbReference>
<dbReference type="NCBIfam" id="TIGR00191">
    <property type="entry name" value="thrB"/>
    <property type="match status" value="1"/>
</dbReference>
<dbReference type="PANTHER" id="PTHR20861:SF1">
    <property type="entry name" value="HOMOSERINE KINASE"/>
    <property type="match status" value="1"/>
</dbReference>
<dbReference type="PANTHER" id="PTHR20861">
    <property type="entry name" value="HOMOSERINE/4-DIPHOSPHOCYTIDYL-2-C-METHYL-D-ERYTHRITOL KINASE"/>
    <property type="match status" value="1"/>
</dbReference>
<dbReference type="Pfam" id="PF08544">
    <property type="entry name" value="GHMP_kinases_C"/>
    <property type="match status" value="1"/>
</dbReference>
<dbReference type="Pfam" id="PF00288">
    <property type="entry name" value="GHMP_kinases_N"/>
    <property type="match status" value="1"/>
</dbReference>
<dbReference type="PIRSF" id="PIRSF000676">
    <property type="entry name" value="Homoser_kin"/>
    <property type="match status" value="1"/>
</dbReference>
<dbReference type="PRINTS" id="PR00958">
    <property type="entry name" value="HOMSERKINASE"/>
</dbReference>
<dbReference type="SUPFAM" id="SSF55060">
    <property type="entry name" value="GHMP Kinase, C-terminal domain"/>
    <property type="match status" value="1"/>
</dbReference>
<dbReference type="SUPFAM" id="SSF54211">
    <property type="entry name" value="Ribosomal protein S5 domain 2-like"/>
    <property type="match status" value="1"/>
</dbReference>
<dbReference type="PROSITE" id="PS00627">
    <property type="entry name" value="GHMP_KINASES_ATP"/>
    <property type="match status" value="1"/>
</dbReference>
<sequence>MVKVYAPASIGNVSVGFDVLGAAVSPVDGTLLGDCVSVSRADSFSLQSAGRFVDKLPAEPEQNIVYQCWQRFCEAVGETVPVAMLLEKNMPIGSGLGSSACSVVVALVAMNAHCGRPLNDDQMLMLMGEMEGRISGGVHFDNVAPCFLGGMQLMLEENGIISQTVPGFDDWLWVMAYPGIKVSTAEARAILPAQYRRQDCISHGRYLACFVHACHTRQPALAAKLMKDVIAEPYRTRLLPGFADARQAVGDIGALACGISGSGPTLFAICDRQDTASRVADWLTQHYLQNDEGFVHICRLDTSGARLMMD</sequence>